<name>ACTH_HUMAN</name>
<sequence length="376" mass="41877">MCEEETTALVCDNGSGLCKAGFAGDDAPRAVFPSIVGRPRHQGVMVGMGQKDSYVGDEAQSKRGILTLKYPIEHGIITNWDDMEKIWHHSFYNELRVAPEEHPTLLTEAPLNPKANREKMTQIMFETFNVPAMYVAIQAVLSLYASGRTTGIVLDSGDGVTHNVPIYEGYALPHAIMRLDLAGRDLTDYLMKILTERGYSFVTTAEREIVRDIKEKLCYVALDFENEMATAASSSSLEKSYELPDGQVITIGNERFRCPETLFQPSFIGMESAGIHETTYNSIMKCDIDIRKDLYANNVLSGGTTMYPGIADRMQKEITALAPSTMKIKIIAPPERKYSVWIGGSILASLSTFQQMWISKPEYDEAGPSIVHRKCF</sequence>
<comment type="function">
    <text>Actins are highly conserved proteins that are involved in various types of cell motility and are ubiquitously expressed in all eukaryotic cells.</text>
</comment>
<comment type="catalytic activity">
    <reaction evidence="5">
        <text>ATP + H2O = ADP + phosphate + H(+)</text>
        <dbReference type="Rhea" id="RHEA:13065"/>
        <dbReference type="ChEBI" id="CHEBI:15377"/>
        <dbReference type="ChEBI" id="CHEBI:15378"/>
        <dbReference type="ChEBI" id="CHEBI:30616"/>
        <dbReference type="ChEBI" id="CHEBI:43474"/>
        <dbReference type="ChEBI" id="CHEBI:456216"/>
    </reaction>
</comment>
<comment type="subunit">
    <text>Polymerization of globular actin (G-actin) leads to a structural filament (F-actin) in the form of a two-stranded helix. Each actin can bind to 4 others.</text>
</comment>
<comment type="subcellular location">
    <subcellularLocation>
        <location>Cytoplasm</location>
        <location>Cytoskeleton</location>
    </subcellularLocation>
</comment>
<comment type="alternative products">
    <event type="alternative splicing"/>
    <isoform>
        <id>P63267-1</id>
        <name>1</name>
        <sequence type="displayed"/>
    </isoform>
    <isoform>
        <id>P63267-2</id>
        <name>2</name>
        <sequence type="described" ref="VSP_045861"/>
    </isoform>
</comment>
<comment type="tissue specificity">
    <text evidence="10">In the intestine, abundantly expressed in smooth muscle cells of muscularis mucosa and muscularis propria. Also detected in intestinal vascular smooth muscle cells.</text>
</comment>
<comment type="PTM">
    <text evidence="3">Oxidation of Met-45 and Met-48 by MICALs (MICAL1, MICAL2 or MICAL3) to form methionine sulfoxide promotes actin filament depolymerization. MICAL1 and MICAL2 produce the (R)-S-oxide form. The (R)-S-oxide form is reverted by MSRB1 and MSRB2, which promotes actin repolymerization.</text>
</comment>
<comment type="PTM">
    <molecule>Actin, gamma-enteric smooth muscle, intermediate form</molecule>
    <text evidence="2">N-terminal cleavage of acetylated cysteine of intermediate muscle actin by ACTMAP.</text>
</comment>
<comment type="PTM">
    <text evidence="4">Monomethylation at Lys-85 (K84me1) regulates actin-myosin interaction and actomyosin-dependent processes. Demethylation by ALKBH4 is required for maintaining actomyosin dynamics supporting normal cleavage furrow ingression during cytokinesis and cell migration.</text>
</comment>
<comment type="PTM">
    <text evidence="14 15">Methylated at His-74 by SETD3.</text>
</comment>
<comment type="PTM">
    <text evidence="20 21">(Microbial infection) Monomeric actin is cross-linked by V.cholerae toxins RtxA and VgrG1 in case of infection: bacterial toxins mediate the cross-link between Lys-51 of one monomer and Glu-271 of another actin monomer, resulting in formation of highly toxic actin oligomers that cause cell rounding (PubMed:19015515). The toxin can be highly efficient at very low concentrations by acting on formin homology family proteins: toxic actin oligomers bind with high affinity to formins and adversely affect both nucleation and elongation abilities of formins, causing their potent inhibition in both profilin-dependent and independent manners (PubMed:26228148).</text>
</comment>
<comment type="disease" evidence="6 8 9 10 11 13 16 17">
    <disease id="DI-04078">
        <name>Visceral myopathy 1</name>
        <acronym>VSCM1</acronym>
        <description>An autosomal dominant form of myopathic pseudo-obstruction characterized by impaired function of enteric smooth muscle cells, resulting in abnormal intestinal motility, severe abdominal pain, malnutrition, and even death. The disease shows inter- and intrafamilial variability. Most severely affected patients exhibit prenatal bladder enlargement, intestinal malrotation, neonatal functional gastrointestinal obstruction, and dependence on total parenteral nutrition and urinary catheterization.</description>
        <dbReference type="MIM" id="155310"/>
    </disease>
    <text>The disease is caused by variants affecting the gene represented in this entry.</text>
</comment>
<comment type="disease" evidence="7 8 10 11 12 13 16">
    <disease id="DI-06166">
        <name>Megacystis-microcolon-intestinal hypoperistalsis syndrome 5</name>
        <acronym>MMIHS5</acronym>
        <description>A form of megacystis-microcolon-intestinal hypoperistalsis syndrome, a congenital visceral myopathy primarily affecting females, and characterized by loss of smooth muscle contraction in the bladder and intestine. Affected individuals present at birth with functional obstruction of intestine, microcolon, dilation of bladder, and secondary hydronephrosis. The majority of cases have a fatal outcome due to malnutrition and sepsis, followed by multiorgan failure. MMIHS5 is an autosomal dominant form with significant inter- and intrafamilial variability.</description>
        <dbReference type="MIM" id="619431"/>
    </disease>
    <text>The disease is caused by variants affecting the gene represented in this entry.</text>
</comment>
<comment type="miscellaneous">
    <text>In vertebrates 3 main groups of actin isoforms, alpha, beta and gamma have been identified. The alpha actins are found in muscle tissues and are a major constituent of the contractile apparatus. The beta and gamma actins coexist in most cell types as components of the cytoskeleton and as mediators of internal cell motility.</text>
</comment>
<comment type="similarity">
    <text evidence="19">Belongs to the actin family.</text>
</comment>
<proteinExistence type="evidence at protein level"/>
<dbReference type="EC" id="3.6.4.-" evidence="5"/>
<dbReference type="EMBL" id="X16940">
    <property type="protein sequence ID" value="CAA34814.1"/>
    <property type="molecule type" value="mRNA"/>
</dbReference>
<dbReference type="EMBL" id="D00654">
    <property type="protein sequence ID" value="BAA00546.1"/>
    <property type="molecule type" value="Genomic_DNA"/>
</dbReference>
<dbReference type="EMBL" id="AK304523">
    <property type="protein sequence ID" value="BAG65327.1"/>
    <property type="molecule type" value="mRNA"/>
</dbReference>
<dbReference type="EMBL" id="AK312955">
    <property type="protein sequence ID" value="BAG35794.1"/>
    <property type="molecule type" value="mRNA"/>
</dbReference>
<dbReference type="EMBL" id="CR536515">
    <property type="protein sequence ID" value="CAG38753.1"/>
    <property type="molecule type" value="mRNA"/>
</dbReference>
<dbReference type="EMBL" id="CR541794">
    <property type="protein sequence ID" value="CAG46593.1"/>
    <property type="molecule type" value="mRNA"/>
</dbReference>
<dbReference type="EMBL" id="AC073046">
    <property type="protein sequence ID" value="AAX88909.1"/>
    <property type="molecule type" value="Genomic_DNA"/>
</dbReference>
<dbReference type="EMBL" id="CH471053">
    <property type="protein sequence ID" value="EAW99713.1"/>
    <property type="molecule type" value="Genomic_DNA"/>
</dbReference>
<dbReference type="EMBL" id="BC012617">
    <property type="protein sequence ID" value="AAH12617.1"/>
    <property type="molecule type" value="mRNA"/>
</dbReference>
<dbReference type="EMBL" id="BC094877">
    <property type="protein sequence ID" value="AAH94877.1"/>
    <property type="molecule type" value="mRNA"/>
</dbReference>
<dbReference type="CCDS" id="CCDS1930.1">
    <molecule id="P63267-1"/>
</dbReference>
<dbReference type="CCDS" id="CCDS56124.1">
    <molecule id="P63267-2"/>
</dbReference>
<dbReference type="PIR" id="A40261">
    <property type="entry name" value="A40261"/>
</dbReference>
<dbReference type="RefSeq" id="NP_001186822.1">
    <molecule id="P63267-2"/>
    <property type="nucleotide sequence ID" value="NM_001199893.2"/>
</dbReference>
<dbReference type="RefSeq" id="NP_001606.1">
    <molecule id="P63267-1"/>
    <property type="nucleotide sequence ID" value="NM_001615.4"/>
</dbReference>
<dbReference type="PDB" id="6JAT">
    <property type="method" value="X-ray"/>
    <property type="resolution" value="2.71 A"/>
    <property type="chains" value="B/D=61-82"/>
</dbReference>
<dbReference type="PDB" id="8V2O">
    <property type="method" value="EM"/>
    <property type="resolution" value="2.45 A"/>
    <property type="chains" value="A/B/C/D/E=1-376"/>
</dbReference>
<dbReference type="PDB" id="8V2Z">
    <property type="method" value="EM"/>
    <property type="resolution" value="2.72 A"/>
    <property type="chains" value="A/B/C/D/E=1-376"/>
</dbReference>
<dbReference type="PDB" id="8V30">
    <property type="method" value="EM"/>
    <property type="resolution" value="2.54 A"/>
    <property type="chains" value="A/B/C/D/E=1-376"/>
</dbReference>
<dbReference type="PDBsum" id="6JAT"/>
<dbReference type="PDBsum" id="8V2O"/>
<dbReference type="PDBsum" id="8V2Z"/>
<dbReference type="PDBsum" id="8V30"/>
<dbReference type="EMDB" id="EMD-42918"/>
<dbReference type="EMDB" id="EMD-42938"/>
<dbReference type="EMDB" id="EMD-42939"/>
<dbReference type="SMR" id="P63267"/>
<dbReference type="BioGRID" id="106587">
    <property type="interactions" value="56"/>
</dbReference>
<dbReference type="CORUM" id="P63267"/>
<dbReference type="FunCoup" id="P63267">
    <property type="interactions" value="696"/>
</dbReference>
<dbReference type="IntAct" id="P63267">
    <property type="interactions" value="20"/>
</dbReference>
<dbReference type="MINT" id="P63267"/>
<dbReference type="STRING" id="9606.ENSP00000386857"/>
<dbReference type="GlyGen" id="P63267">
    <property type="glycosylation" value="1 site, 1 O-linked glycan (1 site)"/>
</dbReference>
<dbReference type="iPTMnet" id="P63267"/>
<dbReference type="MetOSite" id="P63267"/>
<dbReference type="PhosphoSitePlus" id="P63267"/>
<dbReference type="SwissPalm" id="P63267"/>
<dbReference type="BioMuta" id="ACTG2"/>
<dbReference type="DMDM" id="54036679"/>
<dbReference type="OGP" id="P12718"/>
<dbReference type="jPOST" id="P63267"/>
<dbReference type="MassIVE" id="P63267"/>
<dbReference type="PaxDb" id="9606-ENSP00000386857"/>
<dbReference type="PeptideAtlas" id="P63267"/>
<dbReference type="PRIDE" id="P63267"/>
<dbReference type="ProteomicsDB" id="20231"/>
<dbReference type="ProteomicsDB" id="57515">
    <molecule id="P63267-1"/>
</dbReference>
<dbReference type="Pumba" id="P63267"/>
<dbReference type="Antibodypedia" id="3526">
    <property type="antibodies" value="322 antibodies from 32 providers"/>
</dbReference>
<dbReference type="DNASU" id="72"/>
<dbReference type="Ensembl" id="ENST00000345517.8">
    <molecule id="P63267-1"/>
    <property type="protein sequence ID" value="ENSP00000295137.3"/>
    <property type="gene ID" value="ENSG00000163017.14"/>
</dbReference>
<dbReference type="Ensembl" id="ENST00000409624.1">
    <molecule id="P63267-1"/>
    <property type="protein sequence ID" value="ENSP00000386857.1"/>
    <property type="gene ID" value="ENSG00000163017.14"/>
</dbReference>
<dbReference type="Ensembl" id="ENST00000409731.7">
    <molecule id="P63267-2"/>
    <property type="protein sequence ID" value="ENSP00000386929.3"/>
    <property type="gene ID" value="ENSG00000163017.14"/>
</dbReference>
<dbReference type="GeneID" id="72"/>
<dbReference type="KEGG" id="hsa:72"/>
<dbReference type="MANE-Select" id="ENST00000345517.8">
    <property type="protein sequence ID" value="ENSP00000295137.3"/>
    <property type="RefSeq nucleotide sequence ID" value="NM_001615.4"/>
    <property type="RefSeq protein sequence ID" value="NP_001606.1"/>
</dbReference>
<dbReference type="UCSC" id="uc002sjw.4">
    <molecule id="P63267-1"/>
    <property type="organism name" value="human"/>
</dbReference>
<dbReference type="AGR" id="HGNC:145"/>
<dbReference type="CTD" id="72"/>
<dbReference type="DisGeNET" id="72"/>
<dbReference type="GeneCards" id="ACTG2"/>
<dbReference type="GeneReviews" id="ACTG2"/>
<dbReference type="HGNC" id="HGNC:145">
    <property type="gene designation" value="ACTG2"/>
</dbReference>
<dbReference type="HPA" id="ENSG00000163017">
    <property type="expression patterns" value="Tissue enhanced (intestine, seminal vesicle, smooth muscle)"/>
</dbReference>
<dbReference type="MalaCards" id="ACTG2"/>
<dbReference type="MIM" id="102545">
    <property type="type" value="gene"/>
</dbReference>
<dbReference type="MIM" id="155310">
    <property type="type" value="phenotype"/>
</dbReference>
<dbReference type="MIM" id="619431">
    <property type="type" value="phenotype"/>
</dbReference>
<dbReference type="neXtProt" id="NX_P63267"/>
<dbReference type="OpenTargets" id="ENSG00000163017"/>
<dbReference type="Orphanet" id="2604">
    <property type="disease" value="Familial visceral myopathy"/>
</dbReference>
<dbReference type="Orphanet" id="2241">
    <property type="disease" value="Megacystis-microcolon-intestinal hypoperistalsis syndrome"/>
</dbReference>
<dbReference type="Orphanet" id="104077">
    <property type="disease" value="Myopathic intestinal pseudoobstruction"/>
</dbReference>
<dbReference type="PharmGKB" id="PA24469"/>
<dbReference type="VEuPathDB" id="HostDB:ENSG00000163017"/>
<dbReference type="eggNOG" id="KOG0676">
    <property type="taxonomic scope" value="Eukaryota"/>
</dbReference>
<dbReference type="GeneTree" id="ENSGT00940000154148"/>
<dbReference type="HOGENOM" id="CLU_027965_5_3_1"/>
<dbReference type="InParanoid" id="P63267"/>
<dbReference type="OMA" id="PXEREIV"/>
<dbReference type="OrthoDB" id="9816491at2759"/>
<dbReference type="PAN-GO" id="P63267">
    <property type="GO annotations" value="1 GO annotation based on evolutionary models"/>
</dbReference>
<dbReference type="PhylomeDB" id="P63267"/>
<dbReference type="TreeFam" id="TF354237"/>
<dbReference type="PathwayCommons" id="P63267"/>
<dbReference type="Reactome" id="R-HSA-445355">
    <property type="pathway name" value="Smooth Muscle Contraction"/>
</dbReference>
<dbReference type="Reactome" id="R-HSA-9913351">
    <property type="pathway name" value="Formation of the dystrophin-glycoprotein complex (DGC)"/>
</dbReference>
<dbReference type="SignaLink" id="P63267"/>
<dbReference type="SIGNOR" id="P63267"/>
<dbReference type="BioGRID-ORCS" id="72">
    <property type="hits" value="30 hits in 1149 CRISPR screens"/>
</dbReference>
<dbReference type="CD-CODE" id="6F24707C">
    <property type="entry name" value="Cajal body"/>
</dbReference>
<dbReference type="ChiTaRS" id="ACTG2">
    <property type="organism name" value="human"/>
</dbReference>
<dbReference type="GeneWiki" id="ACTG2"/>
<dbReference type="GenomeRNAi" id="72"/>
<dbReference type="Pharos" id="P63267">
    <property type="development level" value="Tbio"/>
</dbReference>
<dbReference type="PRO" id="PR:P63267"/>
<dbReference type="Proteomes" id="UP000005640">
    <property type="component" value="Chromosome 2"/>
</dbReference>
<dbReference type="RNAct" id="P63267">
    <property type="molecule type" value="protein"/>
</dbReference>
<dbReference type="Bgee" id="ENSG00000163017">
    <property type="expression patterns" value="Expressed in seminal vesicle and 173 other cell types or tissues"/>
</dbReference>
<dbReference type="ExpressionAtlas" id="P63267">
    <property type="expression patterns" value="baseline and differential"/>
</dbReference>
<dbReference type="GO" id="GO:0015629">
    <property type="term" value="C:actin cytoskeleton"/>
    <property type="evidence" value="ECO:0000318"/>
    <property type="project" value="GO_Central"/>
</dbReference>
<dbReference type="GO" id="GO:0072562">
    <property type="term" value="C:blood microparticle"/>
    <property type="evidence" value="ECO:0007005"/>
    <property type="project" value="UniProtKB"/>
</dbReference>
<dbReference type="GO" id="GO:0044297">
    <property type="term" value="C:cell body"/>
    <property type="evidence" value="ECO:0000250"/>
    <property type="project" value="AgBase"/>
</dbReference>
<dbReference type="GO" id="GO:0071944">
    <property type="term" value="C:cell periphery"/>
    <property type="evidence" value="ECO:0007669"/>
    <property type="project" value="Ensembl"/>
</dbReference>
<dbReference type="GO" id="GO:0005737">
    <property type="term" value="C:cytoplasm"/>
    <property type="evidence" value="ECO:0000250"/>
    <property type="project" value="AgBase"/>
</dbReference>
<dbReference type="GO" id="GO:0005829">
    <property type="term" value="C:cytosol"/>
    <property type="evidence" value="ECO:0000304"/>
    <property type="project" value="Reactome"/>
</dbReference>
<dbReference type="GO" id="GO:0070062">
    <property type="term" value="C:extracellular exosome"/>
    <property type="evidence" value="ECO:0007005"/>
    <property type="project" value="UniProtKB"/>
</dbReference>
<dbReference type="GO" id="GO:0005615">
    <property type="term" value="C:extracellular space"/>
    <property type="evidence" value="ECO:0007005"/>
    <property type="project" value="UniProtKB"/>
</dbReference>
<dbReference type="GO" id="GO:0030175">
    <property type="term" value="C:filopodium"/>
    <property type="evidence" value="ECO:0000250"/>
    <property type="project" value="AgBase"/>
</dbReference>
<dbReference type="GO" id="GO:0030027">
    <property type="term" value="C:lamellipodium"/>
    <property type="evidence" value="ECO:0000250"/>
    <property type="project" value="AgBase"/>
</dbReference>
<dbReference type="GO" id="GO:0032982">
    <property type="term" value="C:myosin filament"/>
    <property type="evidence" value="ECO:0000250"/>
    <property type="project" value="AgBase"/>
</dbReference>
<dbReference type="GO" id="GO:0005524">
    <property type="term" value="F:ATP binding"/>
    <property type="evidence" value="ECO:0007669"/>
    <property type="project" value="UniProtKB-KW"/>
</dbReference>
<dbReference type="GO" id="GO:0016787">
    <property type="term" value="F:hydrolase activity"/>
    <property type="evidence" value="ECO:0007669"/>
    <property type="project" value="UniProtKB-KW"/>
</dbReference>
<dbReference type="GO" id="GO:0090131">
    <property type="term" value="P:mesenchyme migration"/>
    <property type="evidence" value="ECO:0000250"/>
    <property type="project" value="AgBase"/>
</dbReference>
<dbReference type="GO" id="GO:0010628">
    <property type="term" value="P:positive regulation of gene expression"/>
    <property type="evidence" value="ECO:0000250"/>
    <property type="project" value="AgBase"/>
</dbReference>
<dbReference type="CDD" id="cd10224">
    <property type="entry name" value="ASKHA_NBD_actin"/>
    <property type="match status" value="1"/>
</dbReference>
<dbReference type="FunFam" id="2.30.36.70:FF:000001">
    <property type="entry name" value="Actin, alpha skeletal muscle"/>
    <property type="match status" value="1"/>
</dbReference>
<dbReference type="FunFam" id="3.30.420.40:FF:000131">
    <property type="entry name" value="Actin, alpha skeletal muscle"/>
    <property type="match status" value="1"/>
</dbReference>
<dbReference type="FunFam" id="3.30.420.40:FF:000291">
    <property type="entry name" value="Actin, alpha skeletal muscle"/>
    <property type="match status" value="1"/>
</dbReference>
<dbReference type="FunFam" id="3.90.640.10:FF:000047">
    <property type="entry name" value="Actin, alpha skeletal muscle"/>
    <property type="match status" value="1"/>
</dbReference>
<dbReference type="FunFam" id="3.30.420.40:FF:000058">
    <property type="entry name" value="Putative actin-related protein 5"/>
    <property type="match status" value="1"/>
</dbReference>
<dbReference type="Gene3D" id="3.30.420.40">
    <property type="match status" value="2"/>
</dbReference>
<dbReference type="Gene3D" id="3.90.640.10">
    <property type="entry name" value="Actin, Chain A, domain 4"/>
    <property type="match status" value="1"/>
</dbReference>
<dbReference type="InterPro" id="IPR004000">
    <property type="entry name" value="Actin"/>
</dbReference>
<dbReference type="InterPro" id="IPR020902">
    <property type="entry name" value="Actin/actin-like_CS"/>
</dbReference>
<dbReference type="InterPro" id="IPR004001">
    <property type="entry name" value="Actin_CS"/>
</dbReference>
<dbReference type="InterPro" id="IPR043129">
    <property type="entry name" value="ATPase_NBD"/>
</dbReference>
<dbReference type="PANTHER" id="PTHR11937">
    <property type="entry name" value="ACTIN"/>
    <property type="match status" value="1"/>
</dbReference>
<dbReference type="Pfam" id="PF00022">
    <property type="entry name" value="Actin"/>
    <property type="match status" value="1"/>
</dbReference>
<dbReference type="PRINTS" id="PR00190">
    <property type="entry name" value="ACTIN"/>
</dbReference>
<dbReference type="SMART" id="SM00268">
    <property type="entry name" value="ACTIN"/>
    <property type="match status" value="1"/>
</dbReference>
<dbReference type="SUPFAM" id="SSF53067">
    <property type="entry name" value="Actin-like ATPase domain"/>
    <property type="match status" value="2"/>
</dbReference>
<dbReference type="PROSITE" id="PS00406">
    <property type="entry name" value="ACTINS_1"/>
    <property type="match status" value="1"/>
</dbReference>
<dbReference type="PROSITE" id="PS00432">
    <property type="entry name" value="ACTINS_2"/>
    <property type="match status" value="1"/>
</dbReference>
<dbReference type="PROSITE" id="PS01132">
    <property type="entry name" value="ACTINS_ACT_LIKE"/>
    <property type="match status" value="1"/>
</dbReference>
<accession>P63267</accession>
<accession>B2R7E7</accession>
<accession>B4E315</accession>
<accession>D6W5H8</accession>
<accession>E9PG30</accession>
<accession>P12718</accession>
<accession>Q504R1</accession>
<accession>Q6FI22</accession>
<protein>
    <recommendedName>
        <fullName>Actin, gamma-enteric smooth muscle</fullName>
        <ecNumber evidence="5">3.6.4.-</ecNumber>
    </recommendedName>
    <alternativeName>
        <fullName>Alpha-actin-3</fullName>
    </alternativeName>
    <alternativeName>
        <fullName>Gamma-2-actin</fullName>
    </alternativeName>
    <alternativeName>
        <fullName>Smooth muscle gamma-actin</fullName>
    </alternativeName>
    <component>
        <recommendedName>
            <fullName>Actin, gamma-enteric smooth muscle, intermediate form</fullName>
        </recommendedName>
    </component>
</protein>
<gene>
    <name type="primary">ACTG2</name>
    <name type="synonym">ACTA3</name>
    <name type="synonym">ACTL3</name>
    <name type="synonym">ACTSG</name>
</gene>
<feature type="initiator methionine" description="Removed">
    <location>
        <position position="1"/>
    </location>
</feature>
<feature type="chain" id="PRO_0000442949" description="Actin, gamma-enteric smooth muscle, intermediate form" evidence="2">
    <location>
        <begin position="2"/>
        <end position="376"/>
    </location>
</feature>
<feature type="chain" id="PRO_0000442950" description="Actin, gamma-enteric smooth muscle">
    <location>
        <begin position="3"/>
        <end position="376"/>
    </location>
</feature>
<feature type="modified residue" description="N-acetylcysteine; in intermediate form" evidence="2">
    <location>
        <position position="2"/>
    </location>
</feature>
<feature type="modified residue" description="N-acetylglutamate; in Actin, gamma-enteric smooth muscle" evidence="23">
    <location>
        <position position="3"/>
    </location>
</feature>
<feature type="modified residue" description="Methionine (R)-sulfoxide" evidence="3">
    <location>
        <position position="45"/>
    </location>
</feature>
<feature type="modified residue" description="Methionine (R)-sulfoxide" evidence="3">
    <location>
        <position position="48"/>
    </location>
</feature>
<feature type="modified residue" description="Tele-methylhistidine" evidence="14 15">
    <location>
        <position position="74"/>
    </location>
</feature>
<feature type="cross-link" description="Isoglutamyl lysine isopeptide (Lys-Glu) (interchain with E-271); by Vibrio toxins RtxA and VgrG1" evidence="1">
    <location>
        <position position="51"/>
    </location>
</feature>
<feature type="cross-link" description="Isoglutamyl lysine isopeptide (Glu-Lys) (interchain with K-51); by Vibrio toxins RtxA and VgrG1" evidence="1">
    <location>
        <position position="271"/>
    </location>
</feature>
<feature type="splice variant" id="VSP_045861" description="In isoform 2." evidence="18">
    <location>
        <begin position="43"/>
        <end position="85"/>
    </location>
</feature>
<feature type="sequence variant" id="VAR_071279" description="In MMIHS5; interferes with proper polymerization into thin filaments; dbSNP:rs587777385." evidence="8 10 13">
    <original>R</original>
    <variation>C</variation>
    <location>
        <position position="40"/>
    </location>
</feature>
<feature type="sequence variant" id="VAR_071280" description="In VSCM1 and MMIHS5; dbSNP:rs587777386." evidence="8 12 13 16">
    <original>R</original>
    <variation>H</variation>
    <location>
        <position position="40"/>
    </location>
</feature>
<feature type="sequence variant" id="VAR_085866" description="In VSCM1; uncertain significance." evidence="16">
    <original>H</original>
    <variation>Q</variation>
    <location>
        <position position="41"/>
    </location>
</feature>
<feature type="sequence variant" id="VAR_071281" description="In VSCM1; dbSNP:rs864309490." evidence="8">
    <original>M</original>
    <variation>T</variation>
    <location>
        <position position="45"/>
    </location>
</feature>
<feature type="sequence variant" id="VAR_071282" description="In VSCM1; dbSNP:rs864309491." evidence="8">
    <original>R</original>
    <variation>G</variation>
    <location>
        <position position="63"/>
    </location>
</feature>
<feature type="sequence variant" id="VAR_085867" description="In MMIHS5; interferes with proper polymerization into thin filaments." evidence="10">
    <original>R</original>
    <variation>Q</variation>
    <location>
        <position position="63"/>
    </location>
</feature>
<feature type="sequence variant" id="VAR_071283" description="In VSCM1." evidence="8">
    <original>P</original>
    <variation>L</variation>
    <location>
        <position position="110"/>
    </location>
</feature>
<feature type="sequence variant" id="VAR_071284" description="In MMIHS5; dbSNP:rs587777388." evidence="8">
    <original>Y</original>
    <variation>N</variation>
    <location>
        <position position="134"/>
    </location>
</feature>
<feature type="sequence variant" id="VAR_085868" description="In VSCM1." evidence="16">
    <original>L</original>
    <variation>F</variation>
    <location>
        <position position="143"/>
    </location>
</feature>
<feature type="sequence variant" id="VAR_085869" description="In VSCM1." evidence="13">
    <original>R</original>
    <variation>L</variation>
    <location>
        <position position="148"/>
    </location>
</feature>
<feature type="sequence variant" id="VAR_071285" description="In VSCM1; interferes with proper polymerization into thin filaments; dbSNP:rs587777383." evidence="6 9 10">
    <original>R</original>
    <variation>S</variation>
    <location>
        <position position="148"/>
    </location>
</feature>
<feature type="sequence variant" id="VAR_085870" description="In VSCM1." evidence="16">
    <original>T</original>
    <variation>R</variation>
    <location>
        <position position="149"/>
    </location>
</feature>
<feature type="sequence variant" id="VAR_071286" description="In MMIHS5; interferes with proper polymerization into thin filaments leading to impaired contractility of the smooth muscle; dbSNP:rs78001248." evidence="7 8 10 11">
    <original>R</original>
    <variation>C</variation>
    <location>
        <position position="178"/>
    </location>
</feature>
<feature type="sequence variant" id="VAR_071287" description="In MMIHS5; interferes with proper polymerization into thin filaments; dbSNP:rs587777384." evidence="8 10">
    <original>R</original>
    <variation>H</variation>
    <location>
        <position position="178"/>
    </location>
</feature>
<feature type="sequence variant" id="VAR_071288" description="In MMIHS5; interferes with proper polymerization into thin filaments leading to impaired contractility of the smooth muscle; dbSNP:rs587777384." evidence="7 10 11">
    <original>R</original>
    <variation>L</variation>
    <location>
        <position position="178"/>
    </location>
</feature>
<feature type="sequence variant" id="VAR_085871" description="In VSCM1." evidence="11">
    <original>T</original>
    <variation>I</variation>
    <location>
        <position position="195"/>
    </location>
</feature>
<feature type="sequence variant" id="VAR_085872" description="In VSCM1." evidence="16 17">
    <original>E</original>
    <variation>D</variation>
    <location>
        <position position="196"/>
    </location>
</feature>
<feature type="sequence variant" id="VAR_071289" description="In VSCM1; dbSNP:rs864309492." evidence="8">
    <original>G</original>
    <variation>D</variation>
    <location>
        <position position="198"/>
    </location>
</feature>
<feature type="sequence variant" id="VAR_071290" description="In MMIHS5 and VSCM1; dbSNP:rs587777387." evidence="8 12 13 16">
    <original>R</original>
    <variation>C</variation>
    <location>
        <position position="257"/>
    </location>
</feature>
<feature type="sequence variant" id="VAR_085873" description="In MMIHS5." evidence="11">
    <original>R</original>
    <variation>H</variation>
    <location>
        <position position="257"/>
    </location>
</feature>
<feature type="sequence variant" id="VAR_085874" description="Found in a severe infantile gastrointestinal motility disorder; uncertain significance." evidence="16">
    <original>R</original>
    <variation>W</variation>
    <location>
        <position position="336"/>
    </location>
</feature>
<feature type="mutagenesis site" description="Abolished methylation by SETD3." evidence="15">
    <original>I</original>
    <variation>A</variation>
    <variation>D</variation>
    <variation>K</variation>
    <location>
        <position position="72"/>
    </location>
</feature>
<feature type="mutagenesis site" description="Slightly decreased methylation by SETD3." evidence="15">
    <original>I</original>
    <variation>L</variation>
    <variation>M</variation>
    <location>
        <position position="72"/>
    </location>
</feature>
<feature type="sequence conflict" description="In Ref. 4; CAG38753." evidence="19" ref="4">
    <original>V</original>
    <variation>F</variation>
    <location>
        <position position="130"/>
    </location>
</feature>
<feature type="sequence conflict" description="In Ref. 3; BAG65327." evidence="19" ref="3">
    <original>G</original>
    <variation>C</variation>
    <location>
        <position position="157"/>
    </location>
</feature>
<feature type="strand" evidence="24">
    <location>
        <begin position="9"/>
        <end position="13"/>
    </location>
</feature>
<feature type="strand" evidence="24">
    <location>
        <begin position="15"/>
        <end position="22"/>
    </location>
</feature>
<feature type="strand" evidence="24">
    <location>
        <begin position="29"/>
        <end position="33"/>
    </location>
</feature>
<feature type="strand" evidence="24">
    <location>
        <begin position="36"/>
        <end position="39"/>
    </location>
</feature>
<feature type="strand" evidence="25">
    <location>
        <begin position="46"/>
        <end position="48"/>
    </location>
</feature>
<feature type="helix" evidence="24">
    <location>
        <begin position="57"/>
        <end position="61"/>
    </location>
</feature>
<feature type="helix" evidence="24">
    <location>
        <begin position="63"/>
        <end position="65"/>
    </location>
</feature>
<feature type="strand" evidence="24">
    <location>
        <begin position="66"/>
        <end position="69"/>
    </location>
</feature>
<feature type="strand" evidence="24">
    <location>
        <begin position="71"/>
        <end position="73"/>
    </location>
</feature>
<feature type="helix" evidence="24">
    <location>
        <begin position="80"/>
        <end position="91"/>
    </location>
</feature>
<feature type="turn" evidence="24">
    <location>
        <begin position="92"/>
        <end position="95"/>
    </location>
</feature>
<feature type="helix" evidence="24">
    <location>
        <begin position="99"/>
        <end position="101"/>
    </location>
</feature>
<feature type="strand" evidence="24">
    <location>
        <begin position="104"/>
        <end position="108"/>
    </location>
</feature>
<feature type="helix" evidence="24">
    <location>
        <begin position="114"/>
        <end position="126"/>
    </location>
</feature>
<feature type="strand" evidence="24">
    <location>
        <begin position="131"/>
        <end position="137"/>
    </location>
</feature>
<feature type="helix" evidence="24">
    <location>
        <begin position="138"/>
        <end position="146"/>
    </location>
</feature>
<feature type="strand" evidence="24">
    <location>
        <begin position="151"/>
        <end position="156"/>
    </location>
</feature>
<feature type="strand" evidence="24">
    <location>
        <begin position="161"/>
        <end position="167"/>
    </location>
</feature>
<feature type="helix" evidence="24">
    <location>
        <begin position="173"/>
        <end position="175"/>
    </location>
</feature>
<feature type="strand" evidence="24">
    <location>
        <begin position="177"/>
        <end position="179"/>
    </location>
</feature>
<feature type="helix" evidence="24">
    <location>
        <begin position="183"/>
        <end position="193"/>
    </location>
</feature>
<feature type="helix" evidence="24">
    <location>
        <begin position="194"/>
        <end position="197"/>
    </location>
</feature>
<feature type="helix" evidence="24">
    <location>
        <begin position="204"/>
        <end position="217"/>
    </location>
</feature>
<feature type="helix" evidence="24">
    <location>
        <begin position="224"/>
        <end position="233"/>
    </location>
</feature>
<feature type="strand" evidence="25">
    <location>
        <begin position="235"/>
        <end position="237"/>
    </location>
</feature>
<feature type="strand" evidence="24">
    <location>
        <begin position="239"/>
        <end position="242"/>
    </location>
</feature>
<feature type="strand" evidence="25">
    <location>
        <begin position="244"/>
        <end position="246"/>
    </location>
</feature>
<feature type="strand" evidence="24">
    <location>
        <begin position="248"/>
        <end position="252"/>
    </location>
</feature>
<feature type="helix" evidence="24">
    <location>
        <begin position="254"/>
        <end position="257"/>
    </location>
</feature>
<feature type="helix" evidence="24">
    <location>
        <begin position="259"/>
        <end position="262"/>
    </location>
</feature>
<feature type="helix" evidence="24">
    <location>
        <begin position="265"/>
        <end position="268"/>
    </location>
</feature>
<feature type="helix" evidence="24">
    <location>
        <begin position="275"/>
        <end position="284"/>
    </location>
</feature>
<feature type="helix" evidence="24">
    <location>
        <begin position="288"/>
        <end position="290"/>
    </location>
</feature>
<feature type="helix" evidence="24">
    <location>
        <begin position="291"/>
        <end position="295"/>
    </location>
</feature>
<feature type="strand" evidence="24">
    <location>
        <begin position="298"/>
        <end position="302"/>
    </location>
</feature>
<feature type="helix" evidence="24">
    <location>
        <begin position="303"/>
        <end position="306"/>
    </location>
</feature>
<feature type="helix" evidence="24">
    <location>
        <begin position="310"/>
        <end position="321"/>
    </location>
</feature>
<feature type="turn" evidence="24">
    <location>
        <begin position="334"/>
        <end position="337"/>
    </location>
</feature>
<feature type="helix" evidence="24">
    <location>
        <begin position="339"/>
        <end position="348"/>
    </location>
</feature>
<feature type="helix" evidence="26">
    <location>
        <begin position="351"/>
        <end position="353"/>
    </location>
</feature>
<feature type="helix" evidence="24">
    <location>
        <begin position="360"/>
        <end position="366"/>
    </location>
</feature>
<feature type="helix" evidence="24">
    <location>
        <begin position="370"/>
        <end position="372"/>
    </location>
</feature>
<keyword id="KW-0002">3D-structure</keyword>
<keyword id="KW-0007">Acetylation</keyword>
<keyword id="KW-0025">Alternative splicing</keyword>
<keyword id="KW-0067">ATP-binding</keyword>
<keyword id="KW-0963">Cytoplasm</keyword>
<keyword id="KW-0206">Cytoskeleton</keyword>
<keyword id="KW-0225">Disease variant</keyword>
<keyword id="KW-0378">Hydrolase</keyword>
<keyword id="KW-1017">Isopeptide bond</keyword>
<keyword id="KW-0488">Methylation</keyword>
<keyword id="KW-0514">Muscle protein</keyword>
<keyword id="KW-0547">Nucleotide-binding</keyword>
<keyword id="KW-0558">Oxidation</keyword>
<keyword id="KW-1267">Proteomics identification</keyword>
<keyword id="KW-1185">Reference proteome</keyword>
<organism>
    <name type="scientific">Homo sapiens</name>
    <name type="common">Human</name>
    <dbReference type="NCBI Taxonomy" id="9606"/>
    <lineage>
        <taxon>Eukaryota</taxon>
        <taxon>Metazoa</taxon>
        <taxon>Chordata</taxon>
        <taxon>Craniata</taxon>
        <taxon>Vertebrata</taxon>
        <taxon>Euteleostomi</taxon>
        <taxon>Mammalia</taxon>
        <taxon>Eutheria</taxon>
        <taxon>Euarchontoglires</taxon>
        <taxon>Primates</taxon>
        <taxon>Haplorrhini</taxon>
        <taxon>Catarrhini</taxon>
        <taxon>Hominidae</taxon>
        <taxon>Homo</taxon>
    </lineage>
</organism>
<reference key="1">
    <citation type="journal article" date="1990" name="Nucleic Acids Res.">
        <title>The nucleotide sequence of a human smooth muscle (enteric type) gamma-actin cDNA.</title>
        <authorList>
            <person name="Miwa T."/>
            <person name="Kamada S."/>
            <person name="Kakunaga T."/>
        </authorList>
    </citation>
    <scope>NUCLEOTIDE SEQUENCE [MRNA] (ISOFORM 1)</scope>
    <source>
        <tissue>Stomach</tissue>
    </source>
</reference>
<reference key="2">
    <citation type="journal article" date="1991" name="Mol. Cell. Biol.">
        <title>Structure, chromosome location, and expression of the human smooth muscle (enteric type) gamma-actin gene: evolution of six human actin genes.</title>
        <authorList>
            <person name="Miwa T."/>
            <person name="Manabe Y."/>
            <person name="Kurokawa K."/>
            <person name="Kamada S."/>
            <person name="Kanda N."/>
            <person name="Bruns G."/>
            <person name="Ueyama H."/>
            <person name="Kakunaga T."/>
        </authorList>
    </citation>
    <scope>NUCLEOTIDE SEQUENCE [GENOMIC DNA]</scope>
</reference>
<reference key="3">
    <citation type="journal article" date="2004" name="Nat. Genet.">
        <title>Complete sequencing and characterization of 21,243 full-length human cDNAs.</title>
        <authorList>
            <person name="Ota T."/>
            <person name="Suzuki Y."/>
            <person name="Nishikawa T."/>
            <person name="Otsuki T."/>
            <person name="Sugiyama T."/>
            <person name="Irie R."/>
            <person name="Wakamatsu A."/>
            <person name="Hayashi K."/>
            <person name="Sato H."/>
            <person name="Nagai K."/>
            <person name="Kimura K."/>
            <person name="Makita H."/>
            <person name="Sekine M."/>
            <person name="Obayashi M."/>
            <person name="Nishi T."/>
            <person name="Shibahara T."/>
            <person name="Tanaka T."/>
            <person name="Ishii S."/>
            <person name="Yamamoto J."/>
            <person name="Saito K."/>
            <person name="Kawai Y."/>
            <person name="Isono Y."/>
            <person name="Nakamura Y."/>
            <person name="Nagahari K."/>
            <person name="Murakami K."/>
            <person name="Yasuda T."/>
            <person name="Iwayanagi T."/>
            <person name="Wagatsuma M."/>
            <person name="Shiratori A."/>
            <person name="Sudo H."/>
            <person name="Hosoiri T."/>
            <person name="Kaku Y."/>
            <person name="Kodaira H."/>
            <person name="Kondo H."/>
            <person name="Sugawara M."/>
            <person name="Takahashi M."/>
            <person name="Kanda K."/>
            <person name="Yokoi T."/>
            <person name="Furuya T."/>
            <person name="Kikkawa E."/>
            <person name="Omura Y."/>
            <person name="Abe K."/>
            <person name="Kamihara K."/>
            <person name="Katsuta N."/>
            <person name="Sato K."/>
            <person name="Tanikawa M."/>
            <person name="Yamazaki M."/>
            <person name="Ninomiya K."/>
            <person name="Ishibashi T."/>
            <person name="Yamashita H."/>
            <person name="Murakawa K."/>
            <person name="Fujimori K."/>
            <person name="Tanai H."/>
            <person name="Kimata M."/>
            <person name="Watanabe M."/>
            <person name="Hiraoka S."/>
            <person name="Chiba Y."/>
            <person name="Ishida S."/>
            <person name="Ono Y."/>
            <person name="Takiguchi S."/>
            <person name="Watanabe S."/>
            <person name="Yosida M."/>
            <person name="Hotuta T."/>
            <person name="Kusano J."/>
            <person name="Kanehori K."/>
            <person name="Takahashi-Fujii A."/>
            <person name="Hara H."/>
            <person name="Tanase T.-O."/>
            <person name="Nomura Y."/>
            <person name="Togiya S."/>
            <person name="Komai F."/>
            <person name="Hara R."/>
            <person name="Takeuchi K."/>
            <person name="Arita M."/>
            <person name="Imose N."/>
            <person name="Musashino K."/>
            <person name="Yuuki H."/>
            <person name="Oshima A."/>
            <person name="Sasaki N."/>
            <person name="Aotsuka S."/>
            <person name="Yoshikawa Y."/>
            <person name="Matsunawa H."/>
            <person name="Ichihara T."/>
            <person name="Shiohata N."/>
            <person name="Sano S."/>
            <person name="Moriya S."/>
            <person name="Momiyama H."/>
            <person name="Satoh N."/>
            <person name="Takami S."/>
            <person name="Terashima Y."/>
            <person name="Suzuki O."/>
            <person name="Nakagawa S."/>
            <person name="Senoh A."/>
            <person name="Mizoguchi H."/>
            <person name="Goto Y."/>
            <person name="Shimizu F."/>
            <person name="Wakebe H."/>
            <person name="Hishigaki H."/>
            <person name="Watanabe T."/>
            <person name="Sugiyama A."/>
            <person name="Takemoto M."/>
            <person name="Kawakami B."/>
            <person name="Yamazaki M."/>
            <person name="Watanabe K."/>
            <person name="Kumagai A."/>
            <person name="Itakura S."/>
            <person name="Fukuzumi Y."/>
            <person name="Fujimori Y."/>
            <person name="Komiyama M."/>
            <person name="Tashiro H."/>
            <person name="Tanigami A."/>
            <person name="Fujiwara T."/>
            <person name="Ono T."/>
            <person name="Yamada K."/>
            <person name="Fujii Y."/>
            <person name="Ozaki K."/>
            <person name="Hirao M."/>
            <person name="Ohmori Y."/>
            <person name="Kawabata A."/>
            <person name="Hikiji T."/>
            <person name="Kobatake N."/>
            <person name="Inagaki H."/>
            <person name="Ikema Y."/>
            <person name="Okamoto S."/>
            <person name="Okitani R."/>
            <person name="Kawakami T."/>
            <person name="Noguchi S."/>
            <person name="Itoh T."/>
            <person name="Shigeta K."/>
            <person name="Senba T."/>
            <person name="Matsumura K."/>
            <person name="Nakajima Y."/>
            <person name="Mizuno T."/>
            <person name="Morinaga M."/>
            <person name="Sasaki M."/>
            <person name="Togashi T."/>
            <person name="Oyama M."/>
            <person name="Hata H."/>
            <person name="Watanabe M."/>
            <person name="Komatsu T."/>
            <person name="Mizushima-Sugano J."/>
            <person name="Satoh T."/>
            <person name="Shirai Y."/>
            <person name="Takahashi Y."/>
            <person name="Nakagawa K."/>
            <person name="Okumura K."/>
            <person name="Nagase T."/>
            <person name="Nomura N."/>
            <person name="Kikuchi H."/>
            <person name="Masuho Y."/>
            <person name="Yamashita R."/>
            <person name="Nakai K."/>
            <person name="Yada T."/>
            <person name="Nakamura Y."/>
            <person name="Ohara O."/>
            <person name="Isogai T."/>
            <person name="Sugano S."/>
        </authorList>
    </citation>
    <scope>NUCLEOTIDE SEQUENCE [LARGE SCALE MRNA] (ISOFORMS 1 AND 2)</scope>
    <source>
        <tissue>Uterus</tissue>
    </source>
</reference>
<reference key="4">
    <citation type="submission" date="2004-06" db="EMBL/GenBank/DDBJ databases">
        <title>Cloning of human full open reading frames in Gateway(TM) system entry vector (pDONR201).</title>
        <authorList>
            <person name="Ebert L."/>
            <person name="Schick M."/>
            <person name="Neubert P."/>
            <person name="Schatten R."/>
            <person name="Henze S."/>
            <person name="Korn B."/>
        </authorList>
    </citation>
    <scope>NUCLEOTIDE SEQUENCE [LARGE SCALE MRNA] (ISOFORM 1)</scope>
</reference>
<reference key="5">
    <citation type="journal article" date="2005" name="Nature">
        <title>Generation and annotation of the DNA sequences of human chromosomes 2 and 4.</title>
        <authorList>
            <person name="Hillier L.W."/>
            <person name="Graves T.A."/>
            <person name="Fulton R.S."/>
            <person name="Fulton L.A."/>
            <person name="Pepin K.H."/>
            <person name="Minx P."/>
            <person name="Wagner-McPherson C."/>
            <person name="Layman D."/>
            <person name="Wylie K."/>
            <person name="Sekhon M."/>
            <person name="Becker M.C."/>
            <person name="Fewell G.A."/>
            <person name="Delehaunty K.D."/>
            <person name="Miner T.L."/>
            <person name="Nash W.E."/>
            <person name="Kremitzki C."/>
            <person name="Oddy L."/>
            <person name="Du H."/>
            <person name="Sun H."/>
            <person name="Bradshaw-Cordum H."/>
            <person name="Ali J."/>
            <person name="Carter J."/>
            <person name="Cordes M."/>
            <person name="Harris A."/>
            <person name="Isak A."/>
            <person name="van Brunt A."/>
            <person name="Nguyen C."/>
            <person name="Du F."/>
            <person name="Courtney L."/>
            <person name="Kalicki J."/>
            <person name="Ozersky P."/>
            <person name="Abbott S."/>
            <person name="Armstrong J."/>
            <person name="Belter E.A."/>
            <person name="Caruso L."/>
            <person name="Cedroni M."/>
            <person name="Cotton M."/>
            <person name="Davidson T."/>
            <person name="Desai A."/>
            <person name="Elliott G."/>
            <person name="Erb T."/>
            <person name="Fronick C."/>
            <person name="Gaige T."/>
            <person name="Haakenson W."/>
            <person name="Haglund K."/>
            <person name="Holmes A."/>
            <person name="Harkins R."/>
            <person name="Kim K."/>
            <person name="Kruchowski S.S."/>
            <person name="Strong C.M."/>
            <person name="Grewal N."/>
            <person name="Goyea E."/>
            <person name="Hou S."/>
            <person name="Levy A."/>
            <person name="Martinka S."/>
            <person name="Mead K."/>
            <person name="McLellan M.D."/>
            <person name="Meyer R."/>
            <person name="Randall-Maher J."/>
            <person name="Tomlinson C."/>
            <person name="Dauphin-Kohlberg S."/>
            <person name="Kozlowicz-Reilly A."/>
            <person name="Shah N."/>
            <person name="Swearengen-Shahid S."/>
            <person name="Snider J."/>
            <person name="Strong J.T."/>
            <person name="Thompson J."/>
            <person name="Yoakum M."/>
            <person name="Leonard S."/>
            <person name="Pearman C."/>
            <person name="Trani L."/>
            <person name="Radionenko M."/>
            <person name="Waligorski J.E."/>
            <person name="Wang C."/>
            <person name="Rock S.M."/>
            <person name="Tin-Wollam A.-M."/>
            <person name="Maupin R."/>
            <person name="Latreille P."/>
            <person name="Wendl M.C."/>
            <person name="Yang S.-P."/>
            <person name="Pohl C."/>
            <person name="Wallis J.W."/>
            <person name="Spieth J."/>
            <person name="Bieri T.A."/>
            <person name="Berkowicz N."/>
            <person name="Nelson J.O."/>
            <person name="Osborne J."/>
            <person name="Ding L."/>
            <person name="Meyer R."/>
            <person name="Sabo A."/>
            <person name="Shotland Y."/>
            <person name="Sinha P."/>
            <person name="Wohldmann P.E."/>
            <person name="Cook L.L."/>
            <person name="Hickenbotham M.T."/>
            <person name="Eldred J."/>
            <person name="Williams D."/>
            <person name="Jones T.A."/>
            <person name="She X."/>
            <person name="Ciccarelli F.D."/>
            <person name="Izaurralde E."/>
            <person name="Taylor J."/>
            <person name="Schmutz J."/>
            <person name="Myers R.M."/>
            <person name="Cox D.R."/>
            <person name="Huang X."/>
            <person name="McPherson J.D."/>
            <person name="Mardis E.R."/>
            <person name="Clifton S.W."/>
            <person name="Warren W.C."/>
            <person name="Chinwalla A.T."/>
            <person name="Eddy S.R."/>
            <person name="Marra M.A."/>
            <person name="Ovcharenko I."/>
            <person name="Furey T.S."/>
            <person name="Miller W."/>
            <person name="Eichler E.E."/>
            <person name="Bork P."/>
            <person name="Suyama M."/>
            <person name="Torrents D."/>
            <person name="Waterston R.H."/>
            <person name="Wilson R.K."/>
        </authorList>
    </citation>
    <scope>NUCLEOTIDE SEQUENCE [LARGE SCALE GENOMIC DNA]</scope>
</reference>
<reference key="6">
    <citation type="submission" date="2005-09" db="EMBL/GenBank/DDBJ databases">
        <authorList>
            <person name="Mural R.J."/>
            <person name="Istrail S."/>
            <person name="Sutton G.G."/>
            <person name="Florea L."/>
            <person name="Halpern A.L."/>
            <person name="Mobarry C.M."/>
            <person name="Lippert R."/>
            <person name="Walenz B."/>
            <person name="Shatkay H."/>
            <person name="Dew I."/>
            <person name="Miller J.R."/>
            <person name="Flanigan M.J."/>
            <person name="Edwards N.J."/>
            <person name="Bolanos R."/>
            <person name="Fasulo D."/>
            <person name="Halldorsson B.V."/>
            <person name="Hannenhalli S."/>
            <person name="Turner R."/>
            <person name="Yooseph S."/>
            <person name="Lu F."/>
            <person name="Nusskern D.R."/>
            <person name="Shue B.C."/>
            <person name="Zheng X.H."/>
            <person name="Zhong F."/>
            <person name="Delcher A.L."/>
            <person name="Huson D.H."/>
            <person name="Kravitz S.A."/>
            <person name="Mouchard L."/>
            <person name="Reinert K."/>
            <person name="Remington K.A."/>
            <person name="Clark A.G."/>
            <person name="Waterman M.S."/>
            <person name="Eichler E.E."/>
            <person name="Adams M.D."/>
            <person name="Hunkapiller M.W."/>
            <person name="Myers E.W."/>
            <person name="Venter J.C."/>
        </authorList>
    </citation>
    <scope>NUCLEOTIDE SEQUENCE [LARGE SCALE GENOMIC DNA]</scope>
</reference>
<reference key="7">
    <citation type="journal article" date="2004" name="Genome Res.">
        <title>The status, quality, and expansion of the NIH full-length cDNA project: the Mammalian Gene Collection (MGC).</title>
        <authorList>
            <consortium name="The MGC Project Team"/>
        </authorList>
    </citation>
    <scope>NUCLEOTIDE SEQUENCE [LARGE SCALE MRNA] (ISOFORM 1)</scope>
    <source>
        <tissue>Mammary gland</tissue>
        <tissue>Prostate</tissue>
    </source>
</reference>
<reference key="8">
    <citation type="journal article" date="2008" name="Proc. Natl. Acad. Sci. U.S.A.">
        <title>Connecting actin monomers by iso-peptide bond is a toxicity mechanism of the Vibrio cholerae MARTX toxin.</title>
        <authorList>
            <person name="Kudryashov D.S."/>
            <person name="Durer Z.A."/>
            <person name="Ytterberg A.J."/>
            <person name="Sawaya M.R."/>
            <person name="Pashkov I."/>
            <person name="Prochazkova K."/>
            <person name="Yeates T.O."/>
            <person name="Loo R.R."/>
            <person name="Loo J.A."/>
            <person name="Satchell K.J."/>
            <person name="Reisler E."/>
        </authorList>
    </citation>
    <scope>CROSS-LINK BY V.CHOLERAE TOXIN RTXA (MICROBIAL INFECTION)</scope>
</reference>
<reference key="9">
    <citation type="journal article" date="2012" name="Mol. Cell. Proteomics">
        <title>Comparative large-scale characterisation of plant vs. mammal proteins reveals similar and idiosyncratic N-alpha acetylation features.</title>
        <authorList>
            <person name="Bienvenut W.V."/>
            <person name="Sumpton D."/>
            <person name="Martinez A."/>
            <person name="Lilla S."/>
            <person name="Espagne C."/>
            <person name="Meinnel T."/>
            <person name="Giglione C."/>
        </authorList>
    </citation>
    <scope>ACETYLATION [LARGE SCALE ANALYSIS] AT GLU-3</scope>
    <scope>IDENTIFICATION BY MASS SPECTROMETRY [LARGE SCALE ANALYSIS]</scope>
</reference>
<reference key="10">
    <citation type="journal article" date="2015" name="Science">
        <title>ACD toxin-produced actin oligomers poison formin-controlled actin polymerization.</title>
        <authorList>
            <person name="Heisler D.B."/>
            <person name="Kudryashova E."/>
            <person name="Grinevich D.O."/>
            <person name="Suarez C."/>
            <person name="Winkelman J.D."/>
            <person name="Birukov K.G."/>
            <person name="Kotha S.R."/>
            <person name="Parinandi N.L."/>
            <person name="Vavylonis D."/>
            <person name="Kovar D.R."/>
            <person name="Kudryashov D.S."/>
        </authorList>
    </citation>
    <scope>CROSS-LINK BY V.CHOLERAE TOXIN RTXA (MICROBIAL INFECTION)</scope>
</reference>
<reference key="11">
    <citation type="journal article" date="2019" name="Nature">
        <title>SETD3 is an actin histidine methyltransferase that prevents primary dystocia.</title>
        <authorList>
            <person name="Wilkinson A.W."/>
            <person name="Diep J."/>
            <person name="Dai S."/>
            <person name="Liu S."/>
            <person name="Ooi Y.S."/>
            <person name="Song D."/>
            <person name="Li T.M."/>
            <person name="Horton J.R."/>
            <person name="Zhang X."/>
            <person name="Liu C."/>
            <person name="Trivedi D.V."/>
            <person name="Ruppel K.M."/>
            <person name="Vilches-Moure J.G."/>
            <person name="Casey K.M."/>
            <person name="Mak J."/>
            <person name="Cowan T."/>
            <person name="Elias J.E."/>
            <person name="Nagamine C.M."/>
            <person name="Spudich J.A."/>
            <person name="Cheng X."/>
            <person name="Carette J.E."/>
            <person name="Gozani O."/>
        </authorList>
    </citation>
    <scope>METHYLATION AT HIS-74</scope>
</reference>
<reference evidence="22" key="12">
    <citation type="journal article" date="2020" name="Cell Discov.">
        <title>Molecular basis for histidine N3-specific methylation of actin H73 by SETD3.</title>
        <authorList>
            <person name="Zheng Y."/>
            <person name="Zhang X."/>
            <person name="Li H."/>
        </authorList>
    </citation>
    <scope>X-RAY CRYSTALLOGRAPHY (2.71 ANGSTROMS) OF 61-82 IN COMPLEX WITH SETD3</scope>
    <scope>METHYLATION AT HIS-74</scope>
    <scope>MUTAGENESIS OF ILE-72</scope>
</reference>
<reference key="13">
    <citation type="journal article" date="2012" name="Gastroenterology">
        <title>Segregation of a missense variant in enteric smooth muscle actin gamma-2 with autosomal dominant familial visceral myopathy.</title>
        <authorList>
            <person name="Lehtonen H.J."/>
            <person name="Sipponen T."/>
            <person name="Tojkander S."/>
            <person name="Karikoski R."/>
            <person name="Jarvinen H."/>
            <person name="Laing N.G."/>
            <person name="Lappalainen P."/>
            <person name="Aaltonen L.A."/>
            <person name="Tuupanen S."/>
        </authorList>
    </citation>
    <scope>VARIANT VSCM1 SER-148</scope>
</reference>
<reference key="14">
    <citation type="journal article" date="2014" name="Endoscopy">
        <title>Familial visceral myopathy diagnosed by exome sequencing of a patient with chronic intestinal pseudo-obstruction.</title>
        <authorList>
            <person name="Holla O.L."/>
            <person name="Bock G."/>
            <person name="Busk O.L."/>
            <person name="Isfoss B.L."/>
        </authorList>
    </citation>
    <scope>VARIANT VSCM1 SER-148</scope>
</reference>
<reference key="15">
    <citation type="journal article" date="2014" name="Hum. Genet.">
        <title>De novo ACTG2 mutations cause congenital distended bladder, microcolon, and intestinal hypoperistalsis.</title>
        <authorList>
            <person name="Thorson W."/>
            <person name="Diaz-Horta O."/>
            <person name="Foster J. II"/>
            <person name="Spiliopoulos M."/>
            <person name="Quintero R."/>
            <person name="Farooq A."/>
            <person name="Blanton S."/>
            <person name="Tekin M."/>
        </authorList>
    </citation>
    <scope>VARIANTS MMIHS5 CYS-178 AND LEU-178</scope>
    <scope>CHARACTERIZATION OF VARIANTS MMIHS5 CYS-178 AND LEU-178</scope>
    <scope>INVOLVEMENT IN MMIHS5</scope>
</reference>
<reference key="16">
    <citation type="journal article" date="2014" name="PLoS Genet.">
        <title>Heterozygous de novo and inherited mutations in the smooth muscle actin (ACTG2) gene underlie megacystis-microcolon-intestinal hypoperistalsis syndrome.</title>
        <authorList>
            <consortium name="Baylor-Hopkins Center for Mendelian Genomics"/>
            <person name="Wangler M.F."/>
            <person name="Gonzaga-Jauregui C."/>
            <person name="Gambin T."/>
            <person name="Penney S."/>
            <person name="Moss T."/>
            <person name="Chopra A."/>
            <person name="Probst F.J."/>
            <person name="Xia F."/>
            <person name="Yang Y."/>
            <person name="Werlin S."/>
            <person name="Eglite I."/>
            <person name="Kornejeva L."/>
            <person name="Bacino C.A."/>
            <person name="Baldridge D."/>
            <person name="Neul J."/>
            <person name="Lehman E.L."/>
            <person name="Larson A."/>
            <person name="Beuten J."/>
            <person name="Muzny D.M."/>
            <person name="Jhangiani S."/>
            <person name="Gibbs R.A."/>
            <person name="Lupski J.R."/>
            <person name="Beaudet A."/>
        </authorList>
    </citation>
    <scope>VARIANTS MMIHS5 CYS-40; HIS-40; ASN-134; CYS-178; HIS-178 AND CYS-257</scope>
    <scope>VARIANTS VSCM1 HIS-40; THR-45; GLY-63; LEU-110 AND ASP-198</scope>
    <scope>INVOLVEMENT IN MMIHS5</scope>
    <scope>INVOLVEMENT IN VSCM1</scope>
</reference>
<reference key="17">
    <citation type="journal article" date="2016" name="Am. J. Med. Genet. A">
        <title>Visceral myopathy: Clinical and molecular survey of a cohort of seven new patients and state of the art of overlapping phenotypes.</title>
        <authorList>
            <person name="Moreno C.A."/>
            <person name="Metze K."/>
            <person name="Lomazi E.A."/>
            <person name="Bertola D.R."/>
            <person name="Barbosa R.H."/>
            <person name="Cosentino V."/>
            <person name="Sobreira N."/>
            <person name="Cavalcanti D.P."/>
        </authorList>
    </citation>
    <scope>VARIANTS MMIHS5 CYS-178; LEU-178 AND HIS-257</scope>
    <scope>VARIANT VSCM1 ILE-195</scope>
    <scope>INVOLVEMENT IN MMIHS5</scope>
    <scope>INVOLVEMENT IN VSCM1</scope>
</reference>
<reference key="18">
    <citation type="journal article" date="2016" name="Hum. Mol. Genet.">
        <title>ACTG2 variants impair actin polymerization in sporadic Megacystis Microcolon Intestinal Hypoperistalsis Syndrome.</title>
        <authorList>
            <person name="Halim D."/>
            <person name="Hofstra R.M."/>
            <person name="Signorile L."/>
            <person name="Verdijk R.M."/>
            <person name="van der Werf C.S."/>
            <person name="Sribudiani Y."/>
            <person name="Brouwer R.W."/>
            <person name="van Ijcken W.F."/>
            <person name="Dahl N."/>
            <person name="Verheij J.B."/>
            <person name="Baumann C."/>
            <person name="Kerner J."/>
            <person name="van Bever Y."/>
            <person name="Galjart N."/>
            <person name="Wijnen R.M."/>
            <person name="Tibboel D."/>
            <person name="Burns A.J."/>
            <person name="Muller F."/>
            <person name="Brooks A.S."/>
            <person name="Alves M.M."/>
        </authorList>
    </citation>
    <scope>VARIANTS MMIHS5 CYS-40; GLN-63; CYS-178; HIS-178 AND LEU-178</scope>
    <scope>INVOLVEMENT IN MMIHS5</scope>
    <scope>TISSUE SPECIFICITY</scope>
    <scope>CHARACTERIZATION OF VARIANTS MMIHS5 CYS-40; GLN-63; CYS-178; HIS-178 AND LEU-178</scope>
    <scope>CHARACTERIZATION OF VARIANT VSCM1 SER-148</scope>
</reference>
<reference key="19">
    <citation type="journal article" date="2017" name="J. Pediatr. Gastroenterol. Nutr.">
        <title>Diagnosis of chronic intestinal pseudo-obstruction and megacystis by sequencing the ACTG2 gene.</title>
        <authorList>
            <person name="Milunsky A."/>
            <person name="Baldwin C."/>
            <person name="Zhang X."/>
            <person name="Primack D."/>
            <person name="Curnow A."/>
            <person name="Milunsky J."/>
        </authorList>
    </citation>
    <scope>VARIANTS MMIHS5 HIS-40 AND CYS-257</scope>
    <scope>INVOLVEMENT IN MMIHS5</scope>
</reference>
<reference key="20">
    <citation type="journal article" date="2018" name="Neurogastroenterol. Motil.">
        <title>Variants in ACTG2 underlie a substantial number of Australasian patients with primary chronic intestinal pseudo-obstruction.</title>
        <authorList>
            <person name="Ravenscroft G."/>
            <person name="Pannell S."/>
            <person name="O'Grady G."/>
            <person name="Ong R."/>
            <person name="Ee H.C."/>
            <person name="Faiz F."/>
            <person name="Marns L."/>
            <person name="Goel H."/>
            <person name="Kumarasinghe P."/>
            <person name="Sollis E."/>
            <person name="Sivadorai P."/>
            <person name="Wilson M."/>
            <person name="Magoffin A."/>
            <person name="Nightingale S."/>
            <person name="Freckmann M.L."/>
            <person name="Kirk E.P."/>
            <person name="Sachdev R."/>
            <person name="Lemberg D.A."/>
            <person name="Delatycki M.B."/>
            <person name="Kamm M.A."/>
            <person name="Basnayake C."/>
            <person name="Lamont P.J."/>
            <person name="Amor D.J."/>
            <person name="Jones K."/>
            <person name="Schilperoort J."/>
            <person name="Davis M.R."/>
            <person name="Laing N.G."/>
        </authorList>
    </citation>
    <scope>VARIANTS VSCM1 HIS-40; LEU-148 AND CYS-257</scope>
    <scope>VARIANT MMIHS5 CYS-40</scope>
</reference>
<reference key="21">
    <citation type="journal article" date="2021" name="Clin. Genet.">
        <title>Novel ACTG2 variants disclose allelic heterogeneity and bi-allelic inheritance in pediatric chronic intestinal pseudo-obstruction.</title>
        <authorList>
            <person name="Matera I."/>
            <person name="Bordo D."/>
            <person name="Di Duca M."/>
            <person name="Lerone M."/>
            <person name="Santamaria G."/>
            <person name="Pongiglione M."/>
            <person name="Lezo A."/>
            <person name="Diamanti A."/>
            <person name="Spagnuolo M.I."/>
            <person name="Pini Prato A."/>
            <person name="Alberti D."/>
            <person name="Mattioli G."/>
            <person name="Gandullia P."/>
            <person name="Ceccherini I."/>
        </authorList>
    </citation>
    <scope>VARIANT MMIHS5 HIS-40</scope>
    <scope>VARIANTS VSCM1 GLN-41; PHE-143; ARG-149; ASP-196 AND CYS-257</scope>
    <scope>VARIANT TRP-336</scope>
</reference>
<reference key="22">
    <citation type="journal article" date="2021" name="Transl. Pediatr.">
        <title>Visceral myopathy diagnosed by a de novo ACTG2 mutation in a patient with chronic intestinal pseudo-obstruction-a case report.</title>
        <authorList>
            <person name="Xiong X."/>
            <person name="Li J."/>
            <person name="Liu C."/>
            <person name="Xu F."/>
        </authorList>
    </citation>
    <scope>VARIANT VSCM1 ASP-196</scope>
</reference>
<evidence type="ECO:0000250" key="1">
    <source>
        <dbReference type="UniProtKB" id="P60709"/>
    </source>
</evidence>
<evidence type="ECO:0000250" key="2">
    <source>
        <dbReference type="UniProtKB" id="P62737"/>
    </source>
</evidence>
<evidence type="ECO:0000250" key="3">
    <source>
        <dbReference type="UniProtKB" id="P63268"/>
    </source>
</evidence>
<evidence type="ECO:0000250" key="4">
    <source>
        <dbReference type="UniProtKB" id="P68133"/>
    </source>
</evidence>
<evidence type="ECO:0000250" key="5">
    <source>
        <dbReference type="UniProtKB" id="P68137"/>
    </source>
</evidence>
<evidence type="ECO:0000269" key="6">
    <source>
    </source>
</evidence>
<evidence type="ECO:0000269" key="7">
    <source>
    </source>
</evidence>
<evidence type="ECO:0000269" key="8">
    <source>
    </source>
</evidence>
<evidence type="ECO:0000269" key="9">
    <source>
    </source>
</evidence>
<evidence type="ECO:0000269" key="10">
    <source>
    </source>
</evidence>
<evidence type="ECO:0000269" key="11">
    <source>
    </source>
</evidence>
<evidence type="ECO:0000269" key="12">
    <source>
    </source>
</evidence>
<evidence type="ECO:0000269" key="13">
    <source>
    </source>
</evidence>
<evidence type="ECO:0000269" key="14">
    <source>
    </source>
</evidence>
<evidence type="ECO:0000269" key="15">
    <source>
    </source>
</evidence>
<evidence type="ECO:0000269" key="16">
    <source>
    </source>
</evidence>
<evidence type="ECO:0000269" key="17">
    <source>
    </source>
</evidence>
<evidence type="ECO:0000303" key="18">
    <source>
    </source>
</evidence>
<evidence type="ECO:0000305" key="19"/>
<evidence type="ECO:0000305" key="20">
    <source>
    </source>
</evidence>
<evidence type="ECO:0000305" key="21">
    <source>
    </source>
</evidence>
<evidence type="ECO:0007744" key="22">
    <source>
        <dbReference type="PDB" id="6JAT"/>
    </source>
</evidence>
<evidence type="ECO:0007744" key="23">
    <source>
    </source>
</evidence>
<evidence type="ECO:0007829" key="24">
    <source>
        <dbReference type="PDB" id="8V2O"/>
    </source>
</evidence>
<evidence type="ECO:0007829" key="25">
    <source>
        <dbReference type="PDB" id="8V2Z"/>
    </source>
</evidence>
<evidence type="ECO:0007829" key="26">
    <source>
        <dbReference type="PDB" id="8V30"/>
    </source>
</evidence>